<organism>
    <name type="scientific">Streptococcus equi subsp. zooepidemicus (strain H70)</name>
    <dbReference type="NCBI Taxonomy" id="553483"/>
    <lineage>
        <taxon>Bacteria</taxon>
        <taxon>Bacillati</taxon>
        <taxon>Bacillota</taxon>
        <taxon>Bacilli</taxon>
        <taxon>Lactobacillales</taxon>
        <taxon>Streptococcaceae</taxon>
        <taxon>Streptococcus</taxon>
    </lineage>
</organism>
<name>TILS_STRS7</name>
<dbReference type="EC" id="6.3.4.19" evidence="1"/>
<dbReference type="EMBL" id="FM204884">
    <property type="protein sequence ID" value="CAW97574.1"/>
    <property type="molecule type" value="Genomic_DNA"/>
</dbReference>
<dbReference type="SMR" id="C0MC74"/>
<dbReference type="KEGG" id="seq:SZO_00130"/>
<dbReference type="eggNOG" id="COG0037">
    <property type="taxonomic scope" value="Bacteria"/>
</dbReference>
<dbReference type="HOGENOM" id="CLU_018869_0_2_9"/>
<dbReference type="Proteomes" id="UP000001368">
    <property type="component" value="Chromosome"/>
</dbReference>
<dbReference type="GO" id="GO:0005737">
    <property type="term" value="C:cytoplasm"/>
    <property type="evidence" value="ECO:0007669"/>
    <property type="project" value="UniProtKB-SubCell"/>
</dbReference>
<dbReference type="GO" id="GO:0005524">
    <property type="term" value="F:ATP binding"/>
    <property type="evidence" value="ECO:0007669"/>
    <property type="project" value="UniProtKB-UniRule"/>
</dbReference>
<dbReference type="GO" id="GO:0032267">
    <property type="term" value="F:tRNA(Ile)-lysidine synthase activity"/>
    <property type="evidence" value="ECO:0007669"/>
    <property type="project" value="UniProtKB-EC"/>
</dbReference>
<dbReference type="GO" id="GO:0006400">
    <property type="term" value="P:tRNA modification"/>
    <property type="evidence" value="ECO:0007669"/>
    <property type="project" value="UniProtKB-UniRule"/>
</dbReference>
<dbReference type="CDD" id="cd01992">
    <property type="entry name" value="TilS_N"/>
    <property type="match status" value="1"/>
</dbReference>
<dbReference type="Gene3D" id="3.40.50.620">
    <property type="entry name" value="HUPs"/>
    <property type="match status" value="1"/>
</dbReference>
<dbReference type="HAMAP" id="MF_01161">
    <property type="entry name" value="tRNA_Ile_lys_synt"/>
    <property type="match status" value="1"/>
</dbReference>
<dbReference type="InterPro" id="IPR012796">
    <property type="entry name" value="Lysidine-tRNA-synth_C"/>
</dbReference>
<dbReference type="InterPro" id="IPR014729">
    <property type="entry name" value="Rossmann-like_a/b/a_fold"/>
</dbReference>
<dbReference type="InterPro" id="IPR011063">
    <property type="entry name" value="TilS/TtcA_N"/>
</dbReference>
<dbReference type="InterPro" id="IPR012094">
    <property type="entry name" value="tRNA_Ile_lys_synt"/>
</dbReference>
<dbReference type="InterPro" id="IPR012795">
    <property type="entry name" value="tRNA_Ile_lys_synt_N"/>
</dbReference>
<dbReference type="NCBIfam" id="TIGR02433">
    <property type="entry name" value="lysidine_TilS_C"/>
    <property type="match status" value="1"/>
</dbReference>
<dbReference type="NCBIfam" id="TIGR02432">
    <property type="entry name" value="lysidine_TilS_N"/>
    <property type="match status" value="1"/>
</dbReference>
<dbReference type="PANTHER" id="PTHR43033">
    <property type="entry name" value="TRNA(ILE)-LYSIDINE SYNTHASE-RELATED"/>
    <property type="match status" value="1"/>
</dbReference>
<dbReference type="PANTHER" id="PTHR43033:SF1">
    <property type="entry name" value="TRNA(ILE)-LYSIDINE SYNTHASE-RELATED"/>
    <property type="match status" value="1"/>
</dbReference>
<dbReference type="Pfam" id="PF01171">
    <property type="entry name" value="ATP_bind_3"/>
    <property type="match status" value="1"/>
</dbReference>
<dbReference type="SMART" id="SM00977">
    <property type="entry name" value="TilS_C"/>
    <property type="match status" value="1"/>
</dbReference>
<dbReference type="SUPFAM" id="SSF52402">
    <property type="entry name" value="Adenine nucleotide alpha hydrolases-like"/>
    <property type="match status" value="1"/>
</dbReference>
<reference key="1">
    <citation type="journal article" date="2009" name="PLoS Pathog.">
        <title>Genomic evidence for the evolution of Streptococcus equi: host restriction, increased virulence, and genetic exchange with human pathogens.</title>
        <authorList>
            <person name="Holden M.T.G."/>
            <person name="Heather Z."/>
            <person name="Paillot R."/>
            <person name="Steward K.F."/>
            <person name="Webb K."/>
            <person name="Ainslie F."/>
            <person name="Jourdan T."/>
            <person name="Bason N.C."/>
            <person name="Holroyd N.E."/>
            <person name="Mungall K."/>
            <person name="Quail M.A."/>
            <person name="Sanders M."/>
            <person name="Simmonds M."/>
            <person name="Willey D."/>
            <person name="Brooks K."/>
            <person name="Aanensen D.M."/>
            <person name="Spratt B.G."/>
            <person name="Jolley K.A."/>
            <person name="Maiden M.C.J."/>
            <person name="Kehoe M."/>
            <person name="Chanter N."/>
            <person name="Bentley S.D."/>
            <person name="Robinson C."/>
            <person name="Maskell D.J."/>
            <person name="Parkhill J."/>
            <person name="Waller A.S."/>
        </authorList>
    </citation>
    <scope>NUCLEOTIDE SEQUENCE [LARGE SCALE GENOMIC DNA]</scope>
    <source>
        <strain>H70</strain>
    </source>
</reference>
<evidence type="ECO:0000255" key="1">
    <source>
        <dbReference type="HAMAP-Rule" id="MF_01161"/>
    </source>
</evidence>
<feature type="chain" id="PRO_1000213721" description="tRNA(Ile)-lysidine synthase">
    <location>
        <begin position="1"/>
        <end position="427"/>
    </location>
</feature>
<feature type="binding site" evidence="1">
    <location>
        <begin position="27"/>
        <end position="32"/>
    </location>
    <ligand>
        <name>ATP</name>
        <dbReference type="ChEBI" id="CHEBI:30616"/>
    </ligand>
</feature>
<protein>
    <recommendedName>
        <fullName evidence="1">tRNA(Ile)-lysidine synthase</fullName>
        <ecNumber evidence="1">6.3.4.19</ecNumber>
    </recommendedName>
    <alternativeName>
        <fullName evidence="1">tRNA(Ile)-2-lysyl-cytidine synthase</fullName>
    </alternativeName>
    <alternativeName>
        <fullName evidence="1">tRNA(Ile)-lysidine synthetase</fullName>
    </alternativeName>
</protein>
<proteinExistence type="inferred from homology"/>
<gene>
    <name evidence="1" type="primary">tilS</name>
    <name type="ordered locus">SZO_00130</name>
</gene>
<sequence>MTYQHIYNIIKKKAYFDAHQAVLIAVSGGVDSMNLLHFLHAFQAELQIRIGIAHVNHKQRPESDDEEAYLRSWAKKHAIPIYVAYFQGAFSENAARHFRYQFFEEIMQQEHYSALVTAHHADDQAETILMRLIRGSRLRHLAGIREVQPFATGQLIRPFLTVSKEELPNPFHFEDHSNDSMAYFRNRVRHHYLPDFKRENPQATQSLIALSAESRLLLQAFDDLTKGLAFHRLDCFLAQSAAVQFFLLQHYLETFPQLAIKKSQFDDLLHIIRRQKQGIYPIKNTYCLLIEKESFVIKKIIPKTDLNRESKMVSYGDPLDYGGYRFAFSGDLTDKGHDIVIPLYSLSPVTLRHRQAGDRLFLGEFSKKLRRLFIDGKFTNEQRQNAIVGEQAGVIIFVLVGDETYLRKASKHDIMLAKLYIDKLEKR</sequence>
<accession>C0MC74</accession>
<keyword id="KW-0067">ATP-binding</keyword>
<keyword id="KW-0963">Cytoplasm</keyword>
<keyword id="KW-0436">Ligase</keyword>
<keyword id="KW-0547">Nucleotide-binding</keyword>
<keyword id="KW-0819">tRNA processing</keyword>
<comment type="function">
    <text evidence="1">Ligates lysine onto the cytidine present at position 34 of the AUA codon-specific tRNA(Ile) that contains the anticodon CAU, in an ATP-dependent manner. Cytidine is converted to lysidine, thus changing the amino acid specificity of the tRNA from methionine to isoleucine.</text>
</comment>
<comment type="catalytic activity">
    <reaction evidence="1">
        <text>cytidine(34) in tRNA(Ile2) + L-lysine + ATP = lysidine(34) in tRNA(Ile2) + AMP + diphosphate + H(+)</text>
        <dbReference type="Rhea" id="RHEA:43744"/>
        <dbReference type="Rhea" id="RHEA-COMP:10625"/>
        <dbReference type="Rhea" id="RHEA-COMP:10670"/>
        <dbReference type="ChEBI" id="CHEBI:15378"/>
        <dbReference type="ChEBI" id="CHEBI:30616"/>
        <dbReference type="ChEBI" id="CHEBI:32551"/>
        <dbReference type="ChEBI" id="CHEBI:33019"/>
        <dbReference type="ChEBI" id="CHEBI:82748"/>
        <dbReference type="ChEBI" id="CHEBI:83665"/>
        <dbReference type="ChEBI" id="CHEBI:456215"/>
        <dbReference type="EC" id="6.3.4.19"/>
    </reaction>
</comment>
<comment type="subcellular location">
    <subcellularLocation>
        <location evidence="1">Cytoplasm</location>
    </subcellularLocation>
</comment>
<comment type="domain">
    <text>The N-terminal region contains the highly conserved SGGXDS motif, predicted to be a P-loop motif involved in ATP binding.</text>
</comment>
<comment type="similarity">
    <text evidence="1">Belongs to the tRNA(Ile)-lysidine synthase family.</text>
</comment>